<keyword id="KW-0378">Hydrolase</keyword>
<keyword id="KW-0408">Iron</keyword>
<keyword id="KW-0479">Metal-binding</keyword>
<keyword id="KW-0648">Protein biosynthesis</keyword>
<keyword id="KW-1185">Reference proteome</keyword>
<reference key="1">
    <citation type="journal article" date="2005" name="PLoS Biol.">
        <title>The Wolbachia genome of Brugia malayi: endosymbiont evolution within a human pathogenic nematode.</title>
        <authorList>
            <person name="Foster J."/>
            <person name="Ganatra M."/>
            <person name="Kamal I."/>
            <person name="Ware J."/>
            <person name="Makarova K."/>
            <person name="Ivanova N."/>
            <person name="Bhattacharyya A."/>
            <person name="Kapatral V."/>
            <person name="Kumar S."/>
            <person name="Posfai J."/>
            <person name="Vincze T."/>
            <person name="Ingram J."/>
            <person name="Moran L."/>
            <person name="Lapidus A."/>
            <person name="Omelchenko M."/>
            <person name="Kyrpides N."/>
            <person name="Ghedin E."/>
            <person name="Wang S."/>
            <person name="Goltsman E."/>
            <person name="Joukov V."/>
            <person name="Ostrovskaya O."/>
            <person name="Tsukerman K."/>
            <person name="Mazur M."/>
            <person name="Comb D."/>
            <person name="Koonin E."/>
            <person name="Slatko B."/>
        </authorList>
    </citation>
    <scope>NUCLEOTIDE SEQUENCE [LARGE SCALE GENOMIC DNA]</scope>
    <source>
        <strain>TRS</strain>
    </source>
</reference>
<organism>
    <name type="scientific">Wolbachia sp. subsp. Brugia malayi (strain TRS)</name>
    <dbReference type="NCBI Taxonomy" id="292805"/>
    <lineage>
        <taxon>Bacteria</taxon>
        <taxon>Pseudomonadati</taxon>
        <taxon>Pseudomonadota</taxon>
        <taxon>Alphaproteobacteria</taxon>
        <taxon>Rickettsiales</taxon>
        <taxon>Anaplasmataceae</taxon>
        <taxon>Wolbachieae</taxon>
        <taxon>Wolbachia</taxon>
    </lineage>
</organism>
<gene>
    <name evidence="1" type="primary">def</name>
    <name type="ordered locus">Wbm0114</name>
</gene>
<evidence type="ECO:0000255" key="1">
    <source>
        <dbReference type="HAMAP-Rule" id="MF_00163"/>
    </source>
</evidence>
<sequence>MPKLSIVVAPDERLTTRASEVTGINDKIKELVNDMFETMYNAEGLGLAAVQIGVLKRIFVMDIQLEDIKGEPVGYESTGKFCMINPEITELSDEQVILKEGCLSIPEQSHEIRRPKYLTVKYKDLNNKEQTLKASGWLARCIQHELDHLNGILYIRHLSKLKYDMAMKKAEKFKRHYER</sequence>
<dbReference type="EC" id="3.5.1.88" evidence="1"/>
<dbReference type="EMBL" id="AE017321">
    <property type="protein sequence ID" value="AAW70705.1"/>
    <property type="molecule type" value="Genomic_DNA"/>
</dbReference>
<dbReference type="RefSeq" id="WP_011256315.1">
    <property type="nucleotide sequence ID" value="NC_006833.1"/>
</dbReference>
<dbReference type="SMR" id="Q5GTG9"/>
<dbReference type="STRING" id="292805.Wbm0114"/>
<dbReference type="KEGG" id="wbm:Wbm0114"/>
<dbReference type="eggNOG" id="COG0242">
    <property type="taxonomic scope" value="Bacteria"/>
</dbReference>
<dbReference type="HOGENOM" id="CLU_061901_2_2_5"/>
<dbReference type="Proteomes" id="UP000000534">
    <property type="component" value="Chromosome"/>
</dbReference>
<dbReference type="GO" id="GO:0046872">
    <property type="term" value="F:metal ion binding"/>
    <property type="evidence" value="ECO:0007669"/>
    <property type="project" value="UniProtKB-KW"/>
</dbReference>
<dbReference type="GO" id="GO:0042586">
    <property type="term" value="F:peptide deformylase activity"/>
    <property type="evidence" value="ECO:0007669"/>
    <property type="project" value="UniProtKB-UniRule"/>
</dbReference>
<dbReference type="GO" id="GO:0006412">
    <property type="term" value="P:translation"/>
    <property type="evidence" value="ECO:0007669"/>
    <property type="project" value="UniProtKB-UniRule"/>
</dbReference>
<dbReference type="CDD" id="cd00487">
    <property type="entry name" value="Pep_deformylase"/>
    <property type="match status" value="1"/>
</dbReference>
<dbReference type="FunFam" id="3.90.45.10:FF:000005">
    <property type="entry name" value="Peptide deformylase"/>
    <property type="match status" value="1"/>
</dbReference>
<dbReference type="Gene3D" id="3.90.45.10">
    <property type="entry name" value="Peptide deformylase"/>
    <property type="match status" value="1"/>
</dbReference>
<dbReference type="HAMAP" id="MF_00163">
    <property type="entry name" value="Pep_deformylase"/>
    <property type="match status" value="1"/>
</dbReference>
<dbReference type="InterPro" id="IPR023635">
    <property type="entry name" value="Peptide_deformylase"/>
</dbReference>
<dbReference type="InterPro" id="IPR036821">
    <property type="entry name" value="Peptide_deformylase_sf"/>
</dbReference>
<dbReference type="NCBIfam" id="TIGR00079">
    <property type="entry name" value="pept_deformyl"/>
    <property type="match status" value="1"/>
</dbReference>
<dbReference type="NCBIfam" id="NF001159">
    <property type="entry name" value="PRK00150.1-3"/>
    <property type="match status" value="1"/>
</dbReference>
<dbReference type="PANTHER" id="PTHR10458">
    <property type="entry name" value="PEPTIDE DEFORMYLASE"/>
    <property type="match status" value="1"/>
</dbReference>
<dbReference type="PANTHER" id="PTHR10458:SF22">
    <property type="entry name" value="PEPTIDE DEFORMYLASE"/>
    <property type="match status" value="1"/>
</dbReference>
<dbReference type="Pfam" id="PF01327">
    <property type="entry name" value="Pep_deformylase"/>
    <property type="match status" value="1"/>
</dbReference>
<dbReference type="PIRSF" id="PIRSF004749">
    <property type="entry name" value="Pep_def"/>
    <property type="match status" value="1"/>
</dbReference>
<dbReference type="PRINTS" id="PR01576">
    <property type="entry name" value="PDEFORMYLASE"/>
</dbReference>
<dbReference type="SUPFAM" id="SSF56420">
    <property type="entry name" value="Peptide deformylase"/>
    <property type="match status" value="1"/>
</dbReference>
<accession>Q5GTG9</accession>
<feature type="chain" id="PRO_0000301125" description="Peptide deformylase">
    <location>
        <begin position="1"/>
        <end position="179"/>
    </location>
</feature>
<feature type="active site" evidence="1">
    <location>
        <position position="145"/>
    </location>
</feature>
<feature type="binding site" evidence="1">
    <location>
        <position position="102"/>
    </location>
    <ligand>
        <name>Fe cation</name>
        <dbReference type="ChEBI" id="CHEBI:24875"/>
    </ligand>
</feature>
<feature type="binding site" evidence="1">
    <location>
        <position position="144"/>
    </location>
    <ligand>
        <name>Fe cation</name>
        <dbReference type="ChEBI" id="CHEBI:24875"/>
    </ligand>
</feature>
<feature type="binding site" evidence="1">
    <location>
        <position position="148"/>
    </location>
    <ligand>
        <name>Fe cation</name>
        <dbReference type="ChEBI" id="CHEBI:24875"/>
    </ligand>
</feature>
<name>DEF_WOLTR</name>
<protein>
    <recommendedName>
        <fullName evidence="1">Peptide deformylase</fullName>
        <shortName evidence="1">PDF</shortName>
        <ecNumber evidence="1">3.5.1.88</ecNumber>
    </recommendedName>
    <alternativeName>
        <fullName evidence="1">Polypeptide deformylase</fullName>
    </alternativeName>
</protein>
<proteinExistence type="inferred from homology"/>
<comment type="function">
    <text evidence="1">Removes the formyl group from the N-terminal Met of newly synthesized proteins. Requires at least a dipeptide for an efficient rate of reaction. N-terminal L-methionine is a prerequisite for activity but the enzyme has broad specificity at other positions.</text>
</comment>
<comment type="catalytic activity">
    <reaction evidence="1">
        <text>N-terminal N-formyl-L-methionyl-[peptide] + H2O = N-terminal L-methionyl-[peptide] + formate</text>
        <dbReference type="Rhea" id="RHEA:24420"/>
        <dbReference type="Rhea" id="RHEA-COMP:10639"/>
        <dbReference type="Rhea" id="RHEA-COMP:10640"/>
        <dbReference type="ChEBI" id="CHEBI:15377"/>
        <dbReference type="ChEBI" id="CHEBI:15740"/>
        <dbReference type="ChEBI" id="CHEBI:49298"/>
        <dbReference type="ChEBI" id="CHEBI:64731"/>
        <dbReference type="EC" id="3.5.1.88"/>
    </reaction>
</comment>
<comment type="cofactor">
    <cofactor evidence="1">
        <name>Fe(2+)</name>
        <dbReference type="ChEBI" id="CHEBI:29033"/>
    </cofactor>
    <text evidence="1">Binds 1 Fe(2+) ion.</text>
</comment>
<comment type="similarity">
    <text evidence="1">Belongs to the polypeptide deformylase family.</text>
</comment>